<proteinExistence type="evidence at protein level"/>
<protein>
    <recommendedName>
        <fullName evidence="4">Tropinone reductase homolog At2g29330</fullName>
        <ecNumber evidence="4">1.1.1.-</ecNumber>
    </recommendedName>
</protein>
<name>TRNHA_ARATH</name>
<comment type="function">
    <text evidence="3">Reductase active only on small flexible lipophilic carbonyls. No activity with cyclic monoterpenes, tropinone, nitrogen-containing tropinone analogs, tropine or pseudotropine as substrate.</text>
</comment>
<comment type="biophysicochemical properties">
    <kinetics>
        <KM evidence="3">279.2 uM for NADPH</KM>
        <KM evidence="3">59.3 uM for NADH</KM>
        <KM evidence="3">15 uM for NAD</KM>
        <KM evidence="3">108.7 uM for citronellal</KM>
        <KM evidence="3">64.6 uM for pentanal</KM>
        <KM evidence="3">389.7 uM for dimethylpentan-3-one</KM>
        <KM evidence="3">464.1 uM for nerol</KM>
        <KM evidence="3">56.7 uM for 3-methylcyclohexanone</KM>
        <KM evidence="3">61.9 uM for 3-methylcyclohexanol</KM>
        <KM evidence="3">71.5 uM for 4-methylcyclohexanone</KM>
        <KM evidence="3">63.3 uM for 4-methylcyclohexanol</KM>
        <KM evidence="3">105.6 uM for 1,4-cyclohexanedione</KM>
        <text evidence="3">kcat is 0.34 sec(-1) for NADH. kcat is 0.000003 sec(-1) for NAD.</text>
    </kinetics>
</comment>
<comment type="similarity">
    <text evidence="4">Belongs to the short-chain dehydrogenases/reductases (SDR) family. SDR65C subfamily.</text>
</comment>
<reference key="1">
    <citation type="journal article" date="1999" name="Nature">
        <title>Sequence and analysis of chromosome 2 of the plant Arabidopsis thaliana.</title>
        <authorList>
            <person name="Lin X."/>
            <person name="Kaul S."/>
            <person name="Rounsley S.D."/>
            <person name="Shea T.P."/>
            <person name="Benito M.-I."/>
            <person name="Town C.D."/>
            <person name="Fujii C.Y."/>
            <person name="Mason T.M."/>
            <person name="Bowman C.L."/>
            <person name="Barnstead M.E."/>
            <person name="Feldblyum T.V."/>
            <person name="Buell C.R."/>
            <person name="Ketchum K.A."/>
            <person name="Lee J.J."/>
            <person name="Ronning C.M."/>
            <person name="Koo H.L."/>
            <person name="Moffat K.S."/>
            <person name="Cronin L.A."/>
            <person name="Shen M."/>
            <person name="Pai G."/>
            <person name="Van Aken S."/>
            <person name="Umayam L."/>
            <person name="Tallon L.J."/>
            <person name="Gill J.E."/>
            <person name="Adams M.D."/>
            <person name="Carrera A.J."/>
            <person name="Creasy T.H."/>
            <person name="Goodman H.M."/>
            <person name="Somerville C.R."/>
            <person name="Copenhaver G.P."/>
            <person name="Preuss D."/>
            <person name="Nierman W.C."/>
            <person name="White O."/>
            <person name="Eisen J.A."/>
            <person name="Salzberg S.L."/>
            <person name="Fraser C.M."/>
            <person name="Venter J.C."/>
        </authorList>
    </citation>
    <scope>NUCLEOTIDE SEQUENCE [LARGE SCALE GENOMIC DNA]</scope>
    <source>
        <strain>cv. Columbia</strain>
    </source>
</reference>
<reference key="2">
    <citation type="journal article" date="2017" name="Plant J.">
        <title>Araport11: a complete reannotation of the Arabidopsis thaliana reference genome.</title>
        <authorList>
            <person name="Cheng C.Y."/>
            <person name="Krishnakumar V."/>
            <person name="Chan A.P."/>
            <person name="Thibaud-Nissen F."/>
            <person name="Schobel S."/>
            <person name="Town C.D."/>
        </authorList>
    </citation>
    <scope>GENOME REANNOTATION</scope>
    <source>
        <strain>cv. Columbia</strain>
    </source>
</reference>
<reference key="3">
    <citation type="journal article" date="2003" name="Science">
        <title>Empirical analysis of transcriptional activity in the Arabidopsis genome.</title>
        <authorList>
            <person name="Yamada K."/>
            <person name="Lim J."/>
            <person name="Dale J.M."/>
            <person name="Chen H."/>
            <person name="Shinn P."/>
            <person name="Palm C.J."/>
            <person name="Southwick A.M."/>
            <person name="Wu H.C."/>
            <person name="Kim C.J."/>
            <person name="Nguyen M."/>
            <person name="Pham P.K."/>
            <person name="Cheuk R.F."/>
            <person name="Karlin-Newmann G."/>
            <person name="Liu S.X."/>
            <person name="Lam B."/>
            <person name="Sakano H."/>
            <person name="Wu T."/>
            <person name="Yu G."/>
            <person name="Miranda M."/>
            <person name="Quach H.L."/>
            <person name="Tripp M."/>
            <person name="Chang C.H."/>
            <person name="Lee J.M."/>
            <person name="Toriumi M.J."/>
            <person name="Chan M.M."/>
            <person name="Tang C.C."/>
            <person name="Onodera C.S."/>
            <person name="Deng J.M."/>
            <person name="Akiyama K."/>
            <person name="Ansari Y."/>
            <person name="Arakawa T."/>
            <person name="Banh J."/>
            <person name="Banno F."/>
            <person name="Bowser L."/>
            <person name="Brooks S.Y."/>
            <person name="Carninci P."/>
            <person name="Chao Q."/>
            <person name="Choy N."/>
            <person name="Enju A."/>
            <person name="Goldsmith A.D."/>
            <person name="Gurjal M."/>
            <person name="Hansen N.F."/>
            <person name="Hayashizaki Y."/>
            <person name="Johnson-Hopson C."/>
            <person name="Hsuan V.W."/>
            <person name="Iida K."/>
            <person name="Karnes M."/>
            <person name="Khan S."/>
            <person name="Koesema E."/>
            <person name="Ishida J."/>
            <person name="Jiang P.X."/>
            <person name="Jones T."/>
            <person name="Kawai J."/>
            <person name="Kamiya A."/>
            <person name="Meyers C."/>
            <person name="Nakajima M."/>
            <person name="Narusaka M."/>
            <person name="Seki M."/>
            <person name="Sakurai T."/>
            <person name="Satou M."/>
            <person name="Tamse R."/>
            <person name="Vaysberg M."/>
            <person name="Wallender E.K."/>
            <person name="Wong C."/>
            <person name="Yamamura Y."/>
            <person name="Yuan S."/>
            <person name="Shinozaki K."/>
            <person name="Davis R.W."/>
            <person name="Theologis A."/>
            <person name="Ecker J.R."/>
        </authorList>
    </citation>
    <scope>NUCLEOTIDE SEQUENCE [LARGE SCALE MRNA]</scope>
    <source>
        <strain>cv. Columbia</strain>
    </source>
</reference>
<reference key="4">
    <citation type="submission" date="2006-07" db="EMBL/GenBank/DDBJ databases">
        <title>Large-scale analysis of RIKEN Arabidopsis full-length (RAFL) cDNAs.</title>
        <authorList>
            <person name="Totoki Y."/>
            <person name="Seki M."/>
            <person name="Ishida J."/>
            <person name="Nakajima M."/>
            <person name="Enju A."/>
            <person name="Kamiya A."/>
            <person name="Narusaka M."/>
            <person name="Shin-i T."/>
            <person name="Nakagawa M."/>
            <person name="Sakamoto N."/>
            <person name="Oishi K."/>
            <person name="Kohara Y."/>
            <person name="Kobayashi M."/>
            <person name="Toyoda A."/>
            <person name="Sakaki Y."/>
            <person name="Sakurai T."/>
            <person name="Iida K."/>
            <person name="Akiyama K."/>
            <person name="Satou M."/>
            <person name="Toyoda T."/>
            <person name="Konagaya A."/>
            <person name="Carninci P."/>
            <person name="Kawai J."/>
            <person name="Hayashizaki Y."/>
            <person name="Shinozaki K."/>
        </authorList>
    </citation>
    <scope>NUCLEOTIDE SEQUENCE [LARGE SCALE MRNA]</scope>
    <source>
        <strain>cv. Columbia</strain>
    </source>
</reference>
<reference key="5">
    <citation type="journal article" date="2009" name="Chem. Biol. Interact.">
        <title>The SDR (short-chain dehydrogenase/reductase and related enzymes) nomenclature initiative.</title>
        <authorList>
            <person name="Persson B."/>
            <person name="Kallberg Y."/>
            <person name="Bray J.E."/>
            <person name="Bruford E."/>
            <person name="Dellaporta S.L."/>
            <person name="Favia A.D."/>
            <person name="Duarte R.G."/>
            <person name="Joernvall H."/>
            <person name="Kavanagh K.L."/>
            <person name="Kedishvili N."/>
            <person name="Kisiela M."/>
            <person name="Maser E."/>
            <person name="Mindnich R."/>
            <person name="Orchard S."/>
            <person name="Penning T.M."/>
            <person name="Thornton J.M."/>
            <person name="Adamski J."/>
            <person name="Oppermann U."/>
        </authorList>
    </citation>
    <scope>GENE FAMILY</scope>
    <scope>NOMENCLATURE</scope>
</reference>
<reference key="6">
    <citation type="journal article" date="2014" name="Bioorg. Chem.">
        <title>Substrate flexibility and reaction specificity of tropinone reductase-like short-chain dehydrogenases.</title>
        <authorList>
            <person name="Reinhardt N."/>
            <person name="Fischer J."/>
            <person name="Coppi R."/>
            <person name="Blum E."/>
            <person name="Brandt W."/>
            <person name="Draeger B."/>
        </authorList>
    </citation>
    <scope>3D-STRUCTURE MODELING</scope>
    <scope>SUBSTRATE SPECIFICITY</scope>
    <scope>BIOPHYSICOCHEMICAL PROPERTIES</scope>
    <scope>FUNCTION</scope>
</reference>
<evidence type="ECO:0000250" key="1">
    <source>
        <dbReference type="UniProtKB" id="P50162"/>
    </source>
</evidence>
<evidence type="ECO:0000255" key="2">
    <source>
        <dbReference type="PROSITE-ProRule" id="PRU10001"/>
    </source>
</evidence>
<evidence type="ECO:0000269" key="3">
    <source>
    </source>
</evidence>
<evidence type="ECO:0000305" key="4"/>
<evidence type="ECO:0000312" key="5">
    <source>
        <dbReference type="Araport" id="AT2G29330"/>
    </source>
</evidence>
<evidence type="ECO:0000312" key="6">
    <source>
        <dbReference type="EMBL" id="AAC95205.1"/>
    </source>
</evidence>
<evidence type="ECO:0000312" key="7">
    <source>
        <dbReference type="EMBL" id="AEC08235.1"/>
    </source>
</evidence>
<evidence type="ECO:0000312" key="8">
    <source>
        <dbReference type="Proteomes" id="UP000006548"/>
    </source>
</evidence>
<keyword id="KW-0521">NADP</keyword>
<keyword id="KW-0560">Oxidoreductase</keyword>
<keyword id="KW-1185">Reference proteome</keyword>
<organism evidence="8">
    <name type="scientific">Arabidopsis thaliana</name>
    <name type="common">Mouse-ear cress</name>
    <dbReference type="NCBI Taxonomy" id="3702"/>
    <lineage>
        <taxon>Eukaryota</taxon>
        <taxon>Viridiplantae</taxon>
        <taxon>Streptophyta</taxon>
        <taxon>Embryophyta</taxon>
        <taxon>Tracheophyta</taxon>
        <taxon>Spermatophyta</taxon>
        <taxon>Magnoliopsida</taxon>
        <taxon>eudicotyledons</taxon>
        <taxon>Gunneridae</taxon>
        <taxon>Pentapetalae</taxon>
        <taxon>rosids</taxon>
        <taxon>malvids</taxon>
        <taxon>Brassicales</taxon>
        <taxon>Brassicaceae</taxon>
        <taxon>Camelineae</taxon>
        <taxon>Arabidopsis</taxon>
    </lineage>
</organism>
<accession>Q9ZW16</accession>
<dbReference type="EC" id="1.1.1.-" evidence="4"/>
<dbReference type="EMBL" id="AC004561">
    <property type="protein sequence ID" value="AAC95205.1"/>
    <property type="molecule type" value="Genomic_DNA"/>
</dbReference>
<dbReference type="EMBL" id="CP002685">
    <property type="protein sequence ID" value="AEC08235.1"/>
    <property type="molecule type" value="Genomic_DNA"/>
</dbReference>
<dbReference type="EMBL" id="BT005864">
    <property type="protein sequence ID" value="AAO64799.1"/>
    <property type="molecule type" value="mRNA"/>
</dbReference>
<dbReference type="EMBL" id="AK227484">
    <property type="protein sequence ID" value="BAE99485.1"/>
    <property type="molecule type" value="mRNA"/>
</dbReference>
<dbReference type="PIR" id="A84695">
    <property type="entry name" value="A84695"/>
</dbReference>
<dbReference type="RefSeq" id="NP_180494.1">
    <property type="nucleotide sequence ID" value="NM_128487.3"/>
</dbReference>
<dbReference type="SMR" id="Q9ZW16"/>
<dbReference type="FunCoup" id="Q9ZW16">
    <property type="interactions" value="164"/>
</dbReference>
<dbReference type="IntAct" id="Q9ZW16">
    <property type="interactions" value="2"/>
</dbReference>
<dbReference type="STRING" id="3702.Q9ZW16"/>
<dbReference type="PaxDb" id="3702-AT2G29330.1"/>
<dbReference type="ProteomicsDB" id="228724"/>
<dbReference type="EnsemblPlants" id="AT2G29330.1">
    <property type="protein sequence ID" value="AT2G29330.1"/>
    <property type="gene ID" value="AT2G29330"/>
</dbReference>
<dbReference type="GeneID" id="817482"/>
<dbReference type="Gramene" id="AT2G29330.1">
    <property type="protein sequence ID" value="AT2G29330.1"/>
    <property type="gene ID" value="AT2G29330"/>
</dbReference>
<dbReference type="KEGG" id="ath:AT2G29330"/>
<dbReference type="Araport" id="AT2G29330"/>
<dbReference type="TAIR" id="AT2G29330">
    <property type="gene designation" value="TRI"/>
</dbReference>
<dbReference type="eggNOG" id="KOG0725">
    <property type="taxonomic scope" value="Eukaryota"/>
</dbReference>
<dbReference type="HOGENOM" id="CLU_010194_1_1_1"/>
<dbReference type="InParanoid" id="Q9ZW16"/>
<dbReference type="OMA" id="GANVICD"/>
<dbReference type="PhylomeDB" id="Q9ZW16"/>
<dbReference type="BioCyc" id="ARA:AT2G29330-MONOMER"/>
<dbReference type="SABIO-RK" id="Q9ZW16"/>
<dbReference type="PRO" id="PR:Q9ZW16"/>
<dbReference type="Proteomes" id="UP000006548">
    <property type="component" value="Chromosome 2"/>
</dbReference>
<dbReference type="ExpressionAtlas" id="Q9ZW16">
    <property type="expression patterns" value="baseline and differential"/>
</dbReference>
<dbReference type="GO" id="GO:0005777">
    <property type="term" value="C:peroxisome"/>
    <property type="evidence" value="ECO:0007005"/>
    <property type="project" value="TAIR"/>
</dbReference>
<dbReference type="GO" id="GO:0016491">
    <property type="term" value="F:oxidoreductase activity"/>
    <property type="evidence" value="ECO:0007669"/>
    <property type="project" value="UniProtKB-KW"/>
</dbReference>
<dbReference type="FunFam" id="3.40.50.720:FF:000084">
    <property type="entry name" value="Short-chain dehydrogenase reductase"/>
    <property type="match status" value="1"/>
</dbReference>
<dbReference type="Gene3D" id="3.40.50.720">
    <property type="entry name" value="NAD(P)-binding Rossmann-like Domain"/>
    <property type="match status" value="1"/>
</dbReference>
<dbReference type="InterPro" id="IPR036291">
    <property type="entry name" value="NAD(P)-bd_dom_sf"/>
</dbReference>
<dbReference type="InterPro" id="IPR002347">
    <property type="entry name" value="SDR_fam"/>
</dbReference>
<dbReference type="InterPro" id="IPR045000">
    <property type="entry name" value="TR"/>
</dbReference>
<dbReference type="PANTHER" id="PTHR42898:SF29">
    <property type="entry name" value="3-OXOACYL-[ACYL-CARRIER-PROTEIN] REDUCTASE"/>
    <property type="match status" value="1"/>
</dbReference>
<dbReference type="PANTHER" id="PTHR42898">
    <property type="entry name" value="TROPINONE REDUCTASE"/>
    <property type="match status" value="1"/>
</dbReference>
<dbReference type="Pfam" id="PF13561">
    <property type="entry name" value="adh_short_C2"/>
    <property type="match status" value="1"/>
</dbReference>
<dbReference type="PRINTS" id="PR00081">
    <property type="entry name" value="GDHRDH"/>
</dbReference>
<dbReference type="PRINTS" id="PR00080">
    <property type="entry name" value="SDRFAMILY"/>
</dbReference>
<dbReference type="SUPFAM" id="SSF51735">
    <property type="entry name" value="NAD(P)-binding Rossmann-fold domains"/>
    <property type="match status" value="1"/>
</dbReference>
<gene>
    <name evidence="7" type="primary">TRI</name>
    <name evidence="5" type="ordered locus">At2g29330</name>
    <name evidence="6" type="ORF">F16P2.29</name>
</gene>
<feature type="chain" id="PRO_0000432365" description="Tropinone reductase homolog At2g29330">
    <location>
        <begin position="1"/>
        <end position="260"/>
    </location>
</feature>
<feature type="active site" description="Proton acceptor" evidence="2">
    <location>
        <position position="159"/>
    </location>
</feature>
<feature type="binding site" evidence="1">
    <location>
        <begin position="13"/>
        <end position="37"/>
    </location>
    <ligand>
        <name>NADP(+)</name>
        <dbReference type="ChEBI" id="CHEBI:58349"/>
    </ligand>
</feature>
<feature type="binding site" evidence="1">
    <location>
        <position position="146"/>
    </location>
    <ligand>
        <name>substrate</name>
    </ligand>
</feature>
<sequence length="260" mass="27662">MDKRWSLQGLTALVTGGASGIGHAIVEELAGFGAKIHVCDISKTLLNQSLSEWEKKGFQVSGSVCDASNRLERETLMQTVTTIFDGKLNILVNNVGTIRTKPTIEYEAEDFSFLISTNLESAYHLSQLSHPLLKASGNGIITFISSAAGIVSFDAASIYGLTKGALNQLARNLACEWAKDGIRANAVAPNFITTALAKPFLEDAGFNEILSSRTPLGRAGEPREVASLVAFLCLPAASYITGQTICVDGGLTVNGFSYQP</sequence>